<proteinExistence type="uncertain"/>
<feature type="chain" id="PRO_0000299926" description="Putative uncharacterized protein YHR049C-A">
    <location>
        <begin position="1"/>
        <end position="98"/>
    </location>
</feature>
<feature type="transmembrane region" description="Helical" evidence="1">
    <location>
        <begin position="8"/>
        <end position="28"/>
    </location>
</feature>
<feature type="transmembrane region" description="Helical" evidence="1">
    <location>
        <begin position="73"/>
        <end position="93"/>
    </location>
</feature>
<gene>
    <name type="ordered locus">YHR049C-A</name>
</gene>
<reference key="1">
    <citation type="journal article" date="1994" name="Science">
        <title>Complete nucleotide sequence of Saccharomyces cerevisiae chromosome VIII.</title>
        <authorList>
            <person name="Johnston M."/>
            <person name="Andrews S."/>
            <person name="Brinkman R."/>
            <person name="Cooper J."/>
            <person name="Ding H."/>
            <person name="Dover J."/>
            <person name="Du Z."/>
            <person name="Favello A."/>
            <person name="Fulton L."/>
            <person name="Gattung S."/>
            <person name="Geisel C."/>
            <person name="Kirsten J."/>
            <person name="Kucaba T."/>
            <person name="Hillier L.W."/>
            <person name="Jier M."/>
            <person name="Johnston L."/>
            <person name="Langston Y."/>
            <person name="Latreille P."/>
            <person name="Louis E.J."/>
            <person name="Macri C."/>
            <person name="Mardis E."/>
            <person name="Menezes S."/>
            <person name="Mouser L."/>
            <person name="Nhan M."/>
            <person name="Rifkin L."/>
            <person name="Riles L."/>
            <person name="St Peter H."/>
            <person name="Trevaskis E."/>
            <person name="Vaughan K."/>
            <person name="Vignati D."/>
            <person name="Wilcox L."/>
            <person name="Wohldman P."/>
            <person name="Waterston R."/>
            <person name="Wilson R."/>
            <person name="Vaudin M."/>
        </authorList>
    </citation>
    <scope>NUCLEOTIDE SEQUENCE [LARGE SCALE GENOMIC DNA]</scope>
    <source>
        <strain>ATCC 204508 / S288c</strain>
    </source>
</reference>
<reference key="2">
    <citation type="journal article" date="2014" name="G3 (Bethesda)">
        <title>The reference genome sequence of Saccharomyces cerevisiae: Then and now.</title>
        <authorList>
            <person name="Engel S.R."/>
            <person name="Dietrich F.S."/>
            <person name="Fisk D.G."/>
            <person name="Binkley G."/>
            <person name="Balakrishnan R."/>
            <person name="Costanzo M.C."/>
            <person name="Dwight S.S."/>
            <person name="Hitz B.C."/>
            <person name="Karra K."/>
            <person name="Nash R.S."/>
            <person name="Weng S."/>
            <person name="Wong E.D."/>
            <person name="Lloyd P."/>
            <person name="Skrzypek M.S."/>
            <person name="Miyasato S.R."/>
            <person name="Simison M."/>
            <person name="Cherry J.M."/>
        </authorList>
    </citation>
    <scope>GENOME REANNOTATION</scope>
    <scope>SEQUENCE REVISION TO 58</scope>
    <source>
        <strain>ATCC 204508 / S288c</strain>
    </source>
</reference>
<keyword id="KW-0472">Membrane</keyword>
<keyword id="KW-0812">Transmembrane</keyword>
<keyword id="KW-1133">Transmembrane helix</keyword>
<accession>O13533</accession>
<protein>
    <recommendedName>
        <fullName>Putative uncharacterized protein YHR049C-A</fullName>
    </recommendedName>
</protein>
<organism>
    <name type="scientific">Saccharomyces cerevisiae (strain ATCC 204508 / S288c)</name>
    <name type="common">Baker's yeast</name>
    <dbReference type="NCBI Taxonomy" id="559292"/>
    <lineage>
        <taxon>Eukaryota</taxon>
        <taxon>Fungi</taxon>
        <taxon>Dikarya</taxon>
        <taxon>Ascomycota</taxon>
        <taxon>Saccharomycotina</taxon>
        <taxon>Saccharomycetes</taxon>
        <taxon>Saccharomycetales</taxon>
        <taxon>Saccharomycetaceae</taxon>
        <taxon>Saccharomyces</taxon>
    </lineage>
</organism>
<comment type="subcellular location">
    <subcellularLocation>
        <location evidence="2">Membrane</location>
        <topology evidence="2">Multi-pass membrane protein</topology>
    </subcellularLocation>
</comment>
<comment type="caution">
    <text evidence="3">Product of a dubious gene prediction unlikely to encode a functional protein. Because of that it is not part of the S.cerevisiae S288c complete/reference proteome set.</text>
</comment>
<comment type="sequence caution" evidence="2">
    <conflict type="frameshift">
        <sequence resource="EMBL-CDS" id="AAB68922"/>
    </conflict>
</comment>
<name>YH049_YEAST</name>
<sequence length="98" mass="11536">MTRSKRRLILKFNMISFFSAVSLLHYFLPSRKSISMFKKVFVSHAKAPRVDFSRRAGLAARRMEEKRKDATNLWFILYKVLICIYTYSISISLHTPCV</sequence>
<evidence type="ECO:0000255" key="1"/>
<evidence type="ECO:0000305" key="2"/>
<evidence type="ECO:0000305" key="3">
    <source>
    </source>
</evidence>
<dbReference type="EMBL" id="U00062">
    <property type="protein sequence ID" value="AAB68922.1"/>
    <property type="status" value="ALT_FRAME"/>
    <property type="molecule type" value="Genomic_DNA"/>
</dbReference>
<dbReference type="PIR" id="S52599">
    <property type="entry name" value="S52599"/>
</dbReference>
<dbReference type="SMR" id="O13533"/>
<dbReference type="PaxDb" id="4932-YHR049C-A"/>
<dbReference type="EnsemblFungi" id="YHR049C-A_mRNA">
    <property type="protein sequence ID" value="YHR049C-A"/>
    <property type="gene ID" value="YHR049C-A"/>
</dbReference>
<dbReference type="AGR" id="SGD:S000003532"/>
<dbReference type="SGD" id="S000003532">
    <property type="gene designation" value="YHR049C-A"/>
</dbReference>
<dbReference type="HOGENOM" id="CLU_2334834_0_0_1"/>
<dbReference type="GO" id="GO:0016020">
    <property type="term" value="C:membrane"/>
    <property type="evidence" value="ECO:0007669"/>
    <property type="project" value="UniProtKB-SubCell"/>
</dbReference>